<name>YWIC_BACSU</name>
<keyword id="KW-1003">Cell membrane</keyword>
<keyword id="KW-0472">Membrane</keyword>
<keyword id="KW-1185">Reference proteome</keyword>
<keyword id="KW-0812">Transmembrane</keyword>
<keyword id="KW-1133">Transmembrane helix</keyword>
<comment type="subcellular location">
    <subcellularLocation>
        <location evidence="2">Cell membrane</location>
        <topology evidence="2">Multi-pass membrane protein</topology>
    </subcellularLocation>
</comment>
<comment type="similarity">
    <text evidence="2">To H.influenzae HI_1626.</text>
</comment>
<sequence>MKALIPKQHGAWAMLLIPFLLGMVKGGPVIWHIPLFLGWLFLYLAVYPVTLALKKKQSKPYQKWMCYYGFPTCCFLMISVFHKPPLIWVGVSLLPLFLIHMYFARRKNERALLNDVAGVLFFCSGGFASCWLGMGTLDGWAWFIFLQSALFFIGSSFYVKSVIRERKNRAFAYWSWGYHLLLPFLSALFGAGWAFLAFIPSSLRAWFFHGRDWPVKTIGILEIVNACFFLAVMCLFITR</sequence>
<evidence type="ECO:0000255" key="1"/>
<evidence type="ECO:0000305" key="2"/>
<gene>
    <name type="primary">ywiC</name>
    <name type="ordered locus">BSU37300</name>
</gene>
<dbReference type="EMBL" id="Z49884">
    <property type="protein sequence ID" value="CAA90043.1"/>
    <property type="molecule type" value="Genomic_DNA"/>
</dbReference>
<dbReference type="EMBL" id="AL009126">
    <property type="protein sequence ID" value="CAB15758.1"/>
    <property type="molecule type" value="Genomic_DNA"/>
</dbReference>
<dbReference type="PIR" id="S60083">
    <property type="entry name" value="S60083"/>
</dbReference>
<dbReference type="RefSeq" id="NP_391611.1">
    <property type="nucleotide sequence ID" value="NC_000964.3"/>
</dbReference>
<dbReference type="RefSeq" id="WP_003243773.1">
    <property type="nucleotide sequence ID" value="NZ_OZ025638.1"/>
</dbReference>
<dbReference type="FunCoup" id="P46909">
    <property type="interactions" value="39"/>
</dbReference>
<dbReference type="STRING" id="224308.BSU37300"/>
<dbReference type="PaxDb" id="224308-BSU37300"/>
<dbReference type="EnsemblBacteria" id="CAB15758">
    <property type="protein sequence ID" value="CAB15758"/>
    <property type="gene ID" value="BSU_37300"/>
</dbReference>
<dbReference type="GeneID" id="937048"/>
<dbReference type="KEGG" id="bsu:BSU37300"/>
<dbReference type="PATRIC" id="fig|224308.179.peg.4041"/>
<dbReference type="eggNOG" id="ENOG502ZBRV">
    <property type="taxonomic scope" value="Bacteria"/>
</dbReference>
<dbReference type="InParanoid" id="P46909"/>
<dbReference type="OrthoDB" id="2380563at2"/>
<dbReference type="BioCyc" id="BSUB:BSU37300-MONOMER"/>
<dbReference type="Proteomes" id="UP000001570">
    <property type="component" value="Chromosome"/>
</dbReference>
<dbReference type="GO" id="GO:0005886">
    <property type="term" value="C:plasma membrane"/>
    <property type="evidence" value="ECO:0007669"/>
    <property type="project" value="UniProtKB-SubCell"/>
</dbReference>
<dbReference type="InterPro" id="IPR025576">
    <property type="entry name" value="YwiC"/>
</dbReference>
<dbReference type="Pfam" id="PF14256">
    <property type="entry name" value="YwiC"/>
    <property type="match status" value="1"/>
</dbReference>
<proteinExistence type="predicted"/>
<organism>
    <name type="scientific">Bacillus subtilis (strain 168)</name>
    <dbReference type="NCBI Taxonomy" id="224308"/>
    <lineage>
        <taxon>Bacteria</taxon>
        <taxon>Bacillati</taxon>
        <taxon>Bacillota</taxon>
        <taxon>Bacilli</taxon>
        <taxon>Bacillales</taxon>
        <taxon>Bacillaceae</taxon>
        <taxon>Bacillus</taxon>
    </lineage>
</organism>
<protein>
    <recommendedName>
        <fullName>Uncharacterized protein YwiC</fullName>
    </recommendedName>
</protein>
<feature type="chain" id="PRO_0000049974" description="Uncharacterized protein YwiC">
    <location>
        <begin position="1"/>
        <end position="239"/>
    </location>
</feature>
<feature type="transmembrane region" description="Helical" evidence="1">
    <location>
        <begin position="4"/>
        <end position="24"/>
    </location>
</feature>
<feature type="transmembrane region" description="Helical" evidence="1">
    <location>
        <begin position="29"/>
        <end position="49"/>
    </location>
</feature>
<feature type="transmembrane region" description="Helical" evidence="1">
    <location>
        <begin position="61"/>
        <end position="81"/>
    </location>
</feature>
<feature type="transmembrane region" description="Helical" evidence="1">
    <location>
        <begin position="84"/>
        <end position="104"/>
    </location>
</feature>
<feature type="transmembrane region" description="Helical" evidence="1">
    <location>
        <begin position="116"/>
        <end position="136"/>
    </location>
</feature>
<feature type="transmembrane region" description="Helical" evidence="1">
    <location>
        <begin position="139"/>
        <end position="159"/>
    </location>
</feature>
<feature type="transmembrane region" description="Helical" evidence="1">
    <location>
        <begin position="180"/>
        <end position="200"/>
    </location>
</feature>
<feature type="transmembrane region" description="Helical" evidence="1">
    <location>
        <begin position="218"/>
        <end position="238"/>
    </location>
</feature>
<accession>P46909</accession>
<reference key="1">
    <citation type="journal article" date="1995" name="EMBO J.">
        <title>Anaerobic transcription activation in Bacillus subtilis: identification of distinct FNR-dependent and -independent regulatory mechanisms.</title>
        <authorList>
            <person name="Cruz Ramos H."/>
            <person name="Boursier L."/>
            <person name="Moszer I."/>
            <person name="Kunst F."/>
            <person name="Danchin A."/>
            <person name="Glaser P."/>
        </authorList>
    </citation>
    <scope>NUCLEOTIDE SEQUENCE [GENOMIC DNA]</scope>
    <source>
        <strain>168</strain>
    </source>
</reference>
<reference key="2">
    <citation type="journal article" date="1997" name="Nature">
        <title>The complete genome sequence of the Gram-positive bacterium Bacillus subtilis.</title>
        <authorList>
            <person name="Kunst F."/>
            <person name="Ogasawara N."/>
            <person name="Moszer I."/>
            <person name="Albertini A.M."/>
            <person name="Alloni G."/>
            <person name="Azevedo V."/>
            <person name="Bertero M.G."/>
            <person name="Bessieres P."/>
            <person name="Bolotin A."/>
            <person name="Borchert S."/>
            <person name="Borriss R."/>
            <person name="Boursier L."/>
            <person name="Brans A."/>
            <person name="Braun M."/>
            <person name="Brignell S.C."/>
            <person name="Bron S."/>
            <person name="Brouillet S."/>
            <person name="Bruschi C.V."/>
            <person name="Caldwell B."/>
            <person name="Capuano V."/>
            <person name="Carter N.M."/>
            <person name="Choi S.-K."/>
            <person name="Codani J.-J."/>
            <person name="Connerton I.F."/>
            <person name="Cummings N.J."/>
            <person name="Daniel R.A."/>
            <person name="Denizot F."/>
            <person name="Devine K.M."/>
            <person name="Duesterhoeft A."/>
            <person name="Ehrlich S.D."/>
            <person name="Emmerson P.T."/>
            <person name="Entian K.-D."/>
            <person name="Errington J."/>
            <person name="Fabret C."/>
            <person name="Ferrari E."/>
            <person name="Foulger D."/>
            <person name="Fritz C."/>
            <person name="Fujita M."/>
            <person name="Fujita Y."/>
            <person name="Fuma S."/>
            <person name="Galizzi A."/>
            <person name="Galleron N."/>
            <person name="Ghim S.-Y."/>
            <person name="Glaser P."/>
            <person name="Goffeau A."/>
            <person name="Golightly E.J."/>
            <person name="Grandi G."/>
            <person name="Guiseppi G."/>
            <person name="Guy B.J."/>
            <person name="Haga K."/>
            <person name="Haiech J."/>
            <person name="Harwood C.R."/>
            <person name="Henaut A."/>
            <person name="Hilbert H."/>
            <person name="Holsappel S."/>
            <person name="Hosono S."/>
            <person name="Hullo M.-F."/>
            <person name="Itaya M."/>
            <person name="Jones L.-M."/>
            <person name="Joris B."/>
            <person name="Karamata D."/>
            <person name="Kasahara Y."/>
            <person name="Klaerr-Blanchard M."/>
            <person name="Klein C."/>
            <person name="Kobayashi Y."/>
            <person name="Koetter P."/>
            <person name="Koningstein G."/>
            <person name="Krogh S."/>
            <person name="Kumano M."/>
            <person name="Kurita K."/>
            <person name="Lapidus A."/>
            <person name="Lardinois S."/>
            <person name="Lauber J."/>
            <person name="Lazarevic V."/>
            <person name="Lee S.-M."/>
            <person name="Levine A."/>
            <person name="Liu H."/>
            <person name="Masuda S."/>
            <person name="Mauel C."/>
            <person name="Medigue C."/>
            <person name="Medina N."/>
            <person name="Mellado R.P."/>
            <person name="Mizuno M."/>
            <person name="Moestl D."/>
            <person name="Nakai S."/>
            <person name="Noback M."/>
            <person name="Noone D."/>
            <person name="O'Reilly M."/>
            <person name="Ogawa K."/>
            <person name="Ogiwara A."/>
            <person name="Oudega B."/>
            <person name="Park S.-H."/>
            <person name="Parro V."/>
            <person name="Pohl T.M."/>
            <person name="Portetelle D."/>
            <person name="Porwollik S."/>
            <person name="Prescott A.M."/>
            <person name="Presecan E."/>
            <person name="Pujic P."/>
            <person name="Purnelle B."/>
            <person name="Rapoport G."/>
            <person name="Rey M."/>
            <person name="Reynolds S."/>
            <person name="Rieger M."/>
            <person name="Rivolta C."/>
            <person name="Rocha E."/>
            <person name="Roche B."/>
            <person name="Rose M."/>
            <person name="Sadaie Y."/>
            <person name="Sato T."/>
            <person name="Scanlan E."/>
            <person name="Schleich S."/>
            <person name="Schroeter R."/>
            <person name="Scoffone F."/>
            <person name="Sekiguchi J."/>
            <person name="Sekowska A."/>
            <person name="Seror S.J."/>
            <person name="Serror P."/>
            <person name="Shin B.-S."/>
            <person name="Soldo B."/>
            <person name="Sorokin A."/>
            <person name="Tacconi E."/>
            <person name="Takagi T."/>
            <person name="Takahashi H."/>
            <person name="Takemaru K."/>
            <person name="Takeuchi M."/>
            <person name="Tamakoshi A."/>
            <person name="Tanaka T."/>
            <person name="Terpstra P."/>
            <person name="Tognoni A."/>
            <person name="Tosato V."/>
            <person name="Uchiyama S."/>
            <person name="Vandenbol M."/>
            <person name="Vannier F."/>
            <person name="Vassarotti A."/>
            <person name="Viari A."/>
            <person name="Wambutt R."/>
            <person name="Wedler E."/>
            <person name="Wedler H."/>
            <person name="Weitzenegger T."/>
            <person name="Winters P."/>
            <person name="Wipat A."/>
            <person name="Yamamoto H."/>
            <person name="Yamane K."/>
            <person name="Yasumoto K."/>
            <person name="Yata K."/>
            <person name="Yoshida K."/>
            <person name="Yoshikawa H.-F."/>
            <person name="Zumstein E."/>
            <person name="Yoshikawa H."/>
            <person name="Danchin A."/>
        </authorList>
    </citation>
    <scope>NUCLEOTIDE SEQUENCE [LARGE SCALE GENOMIC DNA]</scope>
    <source>
        <strain>168</strain>
    </source>
</reference>